<protein>
    <recommendedName>
        <fullName evidence="1">Peptidase T</fullName>
        <ecNumber evidence="1">3.4.11.4</ecNumber>
    </recommendedName>
    <alternativeName>
        <fullName evidence="1">Aminotripeptidase</fullName>
        <shortName evidence="1">Tripeptidase</shortName>
    </alternativeName>
    <alternativeName>
        <fullName evidence="1">Tripeptide aminopeptidase</fullName>
    </alternativeName>
</protein>
<dbReference type="EC" id="3.4.11.4" evidence="1"/>
<dbReference type="EMBL" id="FM178380">
    <property type="protein sequence ID" value="CAQ81153.1"/>
    <property type="molecule type" value="Genomic_DNA"/>
</dbReference>
<dbReference type="RefSeq" id="WP_012551745.1">
    <property type="nucleotide sequence ID" value="NC_011313.1"/>
</dbReference>
<dbReference type="SMR" id="B6ER23"/>
<dbReference type="MEROPS" id="M20.003"/>
<dbReference type="KEGG" id="vsa:VSAL_II0399"/>
<dbReference type="eggNOG" id="COG2195">
    <property type="taxonomic scope" value="Bacteria"/>
</dbReference>
<dbReference type="HOGENOM" id="CLU_053676_0_0_6"/>
<dbReference type="Proteomes" id="UP000001730">
    <property type="component" value="Chromosome 2"/>
</dbReference>
<dbReference type="GO" id="GO:0005829">
    <property type="term" value="C:cytosol"/>
    <property type="evidence" value="ECO:0007669"/>
    <property type="project" value="TreeGrafter"/>
</dbReference>
<dbReference type="GO" id="GO:0008237">
    <property type="term" value="F:metallopeptidase activity"/>
    <property type="evidence" value="ECO:0007669"/>
    <property type="project" value="UniProtKB-KW"/>
</dbReference>
<dbReference type="GO" id="GO:0045148">
    <property type="term" value="F:tripeptide aminopeptidase activity"/>
    <property type="evidence" value="ECO:0007669"/>
    <property type="project" value="UniProtKB-UniRule"/>
</dbReference>
<dbReference type="GO" id="GO:0008270">
    <property type="term" value="F:zinc ion binding"/>
    <property type="evidence" value="ECO:0007669"/>
    <property type="project" value="UniProtKB-UniRule"/>
</dbReference>
<dbReference type="GO" id="GO:0043171">
    <property type="term" value="P:peptide catabolic process"/>
    <property type="evidence" value="ECO:0007669"/>
    <property type="project" value="UniProtKB-UniRule"/>
</dbReference>
<dbReference type="GO" id="GO:0006508">
    <property type="term" value="P:proteolysis"/>
    <property type="evidence" value="ECO:0007669"/>
    <property type="project" value="UniProtKB-UniRule"/>
</dbReference>
<dbReference type="CDD" id="cd03892">
    <property type="entry name" value="M20_peptT"/>
    <property type="match status" value="1"/>
</dbReference>
<dbReference type="Gene3D" id="3.30.70.360">
    <property type="match status" value="1"/>
</dbReference>
<dbReference type="Gene3D" id="3.40.630.10">
    <property type="entry name" value="Zn peptidases"/>
    <property type="match status" value="1"/>
</dbReference>
<dbReference type="HAMAP" id="MF_00550">
    <property type="entry name" value="Aminopeptidase_M20"/>
    <property type="match status" value="1"/>
</dbReference>
<dbReference type="InterPro" id="IPR001261">
    <property type="entry name" value="ArgE/DapE_CS"/>
</dbReference>
<dbReference type="InterPro" id="IPR036264">
    <property type="entry name" value="Bact_exopeptidase_dim_dom"/>
</dbReference>
<dbReference type="InterPro" id="IPR002933">
    <property type="entry name" value="Peptidase_M20"/>
</dbReference>
<dbReference type="InterPro" id="IPR011650">
    <property type="entry name" value="Peptidase_M20_dimer"/>
</dbReference>
<dbReference type="InterPro" id="IPR010161">
    <property type="entry name" value="Peptidase_M20B"/>
</dbReference>
<dbReference type="NCBIfam" id="TIGR01882">
    <property type="entry name" value="peptidase-T"/>
    <property type="match status" value="1"/>
</dbReference>
<dbReference type="NCBIfam" id="NF003976">
    <property type="entry name" value="PRK05469.1"/>
    <property type="match status" value="1"/>
</dbReference>
<dbReference type="NCBIfam" id="NF009920">
    <property type="entry name" value="PRK13381.1"/>
    <property type="match status" value="1"/>
</dbReference>
<dbReference type="PANTHER" id="PTHR42994">
    <property type="entry name" value="PEPTIDASE T"/>
    <property type="match status" value="1"/>
</dbReference>
<dbReference type="PANTHER" id="PTHR42994:SF1">
    <property type="entry name" value="PEPTIDASE T"/>
    <property type="match status" value="1"/>
</dbReference>
<dbReference type="Pfam" id="PF07687">
    <property type="entry name" value="M20_dimer"/>
    <property type="match status" value="1"/>
</dbReference>
<dbReference type="Pfam" id="PF01546">
    <property type="entry name" value="Peptidase_M20"/>
    <property type="match status" value="1"/>
</dbReference>
<dbReference type="PIRSF" id="PIRSF037215">
    <property type="entry name" value="Peptidase_M20B"/>
    <property type="match status" value="1"/>
</dbReference>
<dbReference type="SUPFAM" id="SSF55031">
    <property type="entry name" value="Bacterial exopeptidase dimerisation domain"/>
    <property type="match status" value="1"/>
</dbReference>
<dbReference type="SUPFAM" id="SSF53187">
    <property type="entry name" value="Zn-dependent exopeptidases"/>
    <property type="match status" value="1"/>
</dbReference>
<dbReference type="PROSITE" id="PS00758">
    <property type="entry name" value="ARGE_DAPE_CPG2_1"/>
    <property type="match status" value="1"/>
</dbReference>
<dbReference type="PROSITE" id="PS00759">
    <property type="entry name" value="ARGE_DAPE_CPG2_2"/>
    <property type="match status" value="1"/>
</dbReference>
<gene>
    <name evidence="1" type="primary">pepT</name>
    <name type="ordered locus">VSAL_II0399</name>
</gene>
<comment type="function">
    <text evidence="1">Cleaves the N-terminal amino acid of tripeptides.</text>
</comment>
<comment type="catalytic activity">
    <reaction evidence="1">
        <text>Release of the N-terminal residue from a tripeptide.</text>
        <dbReference type="EC" id="3.4.11.4"/>
    </reaction>
</comment>
<comment type="cofactor">
    <cofactor evidence="1">
        <name>Zn(2+)</name>
        <dbReference type="ChEBI" id="CHEBI:29105"/>
    </cofactor>
    <text evidence="1">Binds 2 Zn(2+) ions per subunit.</text>
</comment>
<comment type="subcellular location">
    <subcellularLocation>
        <location evidence="1">Cytoplasm</location>
    </subcellularLocation>
</comment>
<comment type="similarity">
    <text evidence="1">Belongs to the peptidase M20B family.</text>
</comment>
<reference key="1">
    <citation type="journal article" date="2008" name="BMC Genomics">
        <title>The genome sequence of the fish pathogen Aliivibrio salmonicida strain LFI1238 shows extensive evidence of gene decay.</title>
        <authorList>
            <person name="Hjerde E."/>
            <person name="Lorentzen M.S."/>
            <person name="Holden M.T."/>
            <person name="Seeger K."/>
            <person name="Paulsen S."/>
            <person name="Bason N."/>
            <person name="Churcher C."/>
            <person name="Harris D."/>
            <person name="Norbertczak H."/>
            <person name="Quail M.A."/>
            <person name="Sanders S."/>
            <person name="Thurston S."/>
            <person name="Parkhill J."/>
            <person name="Willassen N.P."/>
            <person name="Thomson N.R."/>
        </authorList>
    </citation>
    <scope>NUCLEOTIDE SEQUENCE [LARGE SCALE GENOMIC DNA]</scope>
    <source>
        <strain>LFI1238</strain>
    </source>
</reference>
<accession>B6ER23</accession>
<feature type="chain" id="PRO_1000129019" description="Peptidase T">
    <location>
        <begin position="1"/>
        <end position="409"/>
    </location>
</feature>
<feature type="active site" evidence="1">
    <location>
        <position position="80"/>
    </location>
</feature>
<feature type="active site" description="Proton acceptor" evidence="1">
    <location>
        <position position="174"/>
    </location>
</feature>
<feature type="binding site" evidence="1">
    <location>
        <position position="78"/>
    </location>
    <ligand>
        <name>Zn(2+)</name>
        <dbReference type="ChEBI" id="CHEBI:29105"/>
        <label>1</label>
    </ligand>
</feature>
<feature type="binding site" evidence="1">
    <location>
        <position position="140"/>
    </location>
    <ligand>
        <name>Zn(2+)</name>
        <dbReference type="ChEBI" id="CHEBI:29105"/>
        <label>1</label>
    </ligand>
</feature>
<feature type="binding site" evidence="1">
    <location>
        <position position="140"/>
    </location>
    <ligand>
        <name>Zn(2+)</name>
        <dbReference type="ChEBI" id="CHEBI:29105"/>
        <label>2</label>
    </ligand>
</feature>
<feature type="binding site" evidence="1">
    <location>
        <position position="175"/>
    </location>
    <ligand>
        <name>Zn(2+)</name>
        <dbReference type="ChEBI" id="CHEBI:29105"/>
        <label>2</label>
    </ligand>
</feature>
<feature type="binding site" evidence="1">
    <location>
        <position position="197"/>
    </location>
    <ligand>
        <name>Zn(2+)</name>
        <dbReference type="ChEBI" id="CHEBI:29105"/>
        <label>1</label>
    </ligand>
</feature>
<feature type="binding site" evidence="1">
    <location>
        <position position="379"/>
    </location>
    <ligand>
        <name>Zn(2+)</name>
        <dbReference type="ChEBI" id="CHEBI:29105"/>
        <label>2</label>
    </ligand>
</feature>
<evidence type="ECO:0000255" key="1">
    <source>
        <dbReference type="HAMAP-Rule" id="MF_00550"/>
    </source>
</evidence>
<organism>
    <name type="scientific">Aliivibrio salmonicida (strain LFI1238)</name>
    <name type="common">Vibrio salmonicida (strain LFI1238)</name>
    <dbReference type="NCBI Taxonomy" id="316275"/>
    <lineage>
        <taxon>Bacteria</taxon>
        <taxon>Pseudomonadati</taxon>
        <taxon>Pseudomonadota</taxon>
        <taxon>Gammaproteobacteria</taxon>
        <taxon>Vibrionales</taxon>
        <taxon>Vibrionaceae</taxon>
        <taxon>Aliivibrio</taxon>
    </lineage>
</organism>
<proteinExistence type="inferred from homology"/>
<keyword id="KW-0031">Aminopeptidase</keyword>
<keyword id="KW-0963">Cytoplasm</keyword>
<keyword id="KW-0378">Hydrolase</keyword>
<keyword id="KW-0479">Metal-binding</keyword>
<keyword id="KW-0482">Metalloprotease</keyword>
<keyword id="KW-0645">Protease</keyword>
<keyword id="KW-0862">Zinc</keyword>
<name>PEPT_ALISL</name>
<sequence length="409" mass="44824">MKQLVERFLSYVSIDTQSNPSAPQCPSTEKQLNLANQLVIELKELKLADVSVDKNGYVMARLPSNVDYDVPAIGFVAHMDTAPDASGENVKPQIIKDYQGETITLGTSGEELNPTQFPDLKNLIGHDLITTDGTTLLGADNKAGIAEILTAIAILQANPEIPHGDICIGFTPDEEIGRGANLFDVEKFNAKWAYTIDGGPVGELEYENFNATSADVICHGVNVHPGTAKGKMINSMNIAAQFQLMMPTDETPEGTEGYEGFYHLKSMESGVAKTELGYIVRDFSREGMAERKAFMQQKVDELNEKLEKGRVELILTDSYFNMREMVEPHPHVIELAKQAMTACDVQPDIKPIRGGTDGARLSFMGLPCPNIFTGGYNFHGIHEFITINGMKQAVDVIVKIAELNALNNK</sequence>